<accession>P13873</accession>
<sequence>MDTFITRNFQTTIIQKAKNTMAEFSEDPELQPAMLFNICVHLEVCYVISDMNFLDEEGKTYTALEGQGKEQNLRPQYEVIEGMPRNIAWMVQRSLAQEHGIETPRYLADLFDYKTKRFIEVGITKGLADDYFWKKKEKLGNSMELMIFSYNQDYSLSNESSLDEEGKGRVLSRLTELQAELSLKNLWQVLIGEEDIEKGIDFKLGQTISKLRDISVPAGFSNFEGMRSYIDNIDPKGAIERNLARMSPLVSVTPKKLKWEDLRPIGPHIYNHELPEVPYNAFLLMSDELGLANMTEGKSKKPKTLAKECLEKYSTLRDQTDPILIMKSEKANENFLWKLWRDCVNTISNEETSNELQKTNYAKWATGDGLTYQKIMKEVAIDDETMYQEEPKIPNKCRVAAWVQTEMNLLSTLTSKRALDLPEIGPDVAPMEHVGSERRKYFVNEINYCKASTVMMKYVLFHTSLLNESNASMGKYKVIPITNRVVNEKGESFDMLHGLAVKGQSHLRGDTDVVTVVTFEFSSTDPRVDSGKWPKYTVFRIGSLFVSGREKSVYLYCRVNGTNKIQMKWGMEARRCLLQSMQQMEAIVEQESSIQGYDMTKACFKGDRVNSPKTFSIGTQEGKLVKGSFGKALRVIFTKCLMHYVFGNAQLEGFSAESRRLLLLIQALKDRKGPWVFDLEGMYSGIEECISNNPWVIQSAYWFNEWLGFEKEGSKVLESIDEIMDE</sequence>
<proteinExistence type="inferred from homology"/>
<gene>
    <name evidence="1" type="primary">PA</name>
</gene>
<comment type="function">
    <text evidence="1">Plays an essential role in viral RNA transcription and replication by forming the heterotrimeric polymerase complex together with PB1 and PB2 subunits. The complex transcribes viral mRNAs by using a unique mechanism called cap-snatching. It consists in the hijacking and cleavage of host capped pre-mRNAs. These short capped RNAs are then used as primers for viral mRNAs. The PB2 subunit is responsible for the binding of the 5' cap of cellular pre-mRNAs which are subsequently cleaved after 10-13 nucleotides by the PA subunit that carries the endonuclease activity.</text>
</comment>
<comment type="cofactor">
    <cofactor evidence="1">
        <name>Mn(2+)</name>
        <dbReference type="ChEBI" id="CHEBI:29035"/>
    </cofactor>
    <text evidence="1">Binds 2 manganese ions per subunit.</text>
</comment>
<comment type="subunit">
    <text evidence="1">Influenza RNA polymerase is composed of three subunits: PB1, PB2 and PA. Interacts (via C-terminus) with PB1 (via N-terminus).</text>
</comment>
<comment type="subcellular location">
    <subcellularLocation>
        <location evidence="1">Host cytoplasm</location>
    </subcellularLocation>
    <subcellularLocation>
        <location evidence="1">Host nucleus</location>
    </subcellularLocation>
    <text evidence="1">PB1 and PA are transported in the host nucleus as a complex.</text>
</comment>
<comment type="alternative products">
    <event type="ribosomal frameshifting"/>
    <isoform>
        <id>P13873-1</id>
        <name>PA</name>
        <sequence type="displayed"/>
    </isoform>
    <isoform>
        <id>P13873-2</id>
        <name>PA-X</name>
        <sequence type="not described"/>
    </isoform>
</comment>
<comment type="PTM">
    <text evidence="1">Phosphorylated on serines and threonines by host kinases, including human casein kinase II.</text>
</comment>
<comment type="similarity">
    <text evidence="1">Belongs to the influenza viruses PA family.</text>
</comment>
<reference key="1">
    <citation type="journal article" date="1988" name="Virology">
        <title>Sequence comparison of wild-type and cold-adapted B/Ann Arbor/1/66 influenza virus genes.</title>
        <authorList>
            <person name="Deborde D.C."/>
            <person name="Donabedian A.M."/>
            <person name="Herlocher M.L."/>
            <person name="Naeve C.W."/>
            <person name="Maassab H.F."/>
        </authorList>
    </citation>
    <scope>NUCLEOTIDE SEQUENCE [GENOMIC RNA]</scope>
</reference>
<dbReference type="EC" id="3.1.-.-" evidence="1"/>
<dbReference type="EMBL" id="M20171">
    <property type="protein sequence ID" value="AAA43765.1"/>
    <property type="molecule type" value="Genomic_RNA"/>
</dbReference>
<dbReference type="PIR" id="E28604">
    <property type="entry name" value="P2IVBC"/>
</dbReference>
<dbReference type="SMR" id="P13873"/>
<dbReference type="IntAct" id="P13873">
    <property type="interactions" value="1"/>
</dbReference>
<dbReference type="GO" id="GO:0030430">
    <property type="term" value="C:host cell cytoplasm"/>
    <property type="evidence" value="ECO:0007669"/>
    <property type="project" value="UniProtKB-SubCell"/>
</dbReference>
<dbReference type="GO" id="GO:0042025">
    <property type="term" value="C:host cell nucleus"/>
    <property type="evidence" value="ECO:0007669"/>
    <property type="project" value="UniProtKB-SubCell"/>
</dbReference>
<dbReference type="GO" id="GO:0004519">
    <property type="term" value="F:endonuclease activity"/>
    <property type="evidence" value="ECO:0007669"/>
    <property type="project" value="UniProtKB-KW"/>
</dbReference>
<dbReference type="GO" id="GO:0046872">
    <property type="term" value="F:metal ion binding"/>
    <property type="evidence" value="ECO:0007669"/>
    <property type="project" value="UniProtKB-KW"/>
</dbReference>
<dbReference type="GO" id="GO:0003723">
    <property type="term" value="F:RNA binding"/>
    <property type="evidence" value="ECO:0007669"/>
    <property type="project" value="UniProtKB-UniRule"/>
</dbReference>
<dbReference type="GO" id="GO:0075526">
    <property type="term" value="P:cap snatching"/>
    <property type="evidence" value="ECO:0007669"/>
    <property type="project" value="UniProtKB-UniRule"/>
</dbReference>
<dbReference type="GO" id="GO:0006351">
    <property type="term" value="P:DNA-templated transcription"/>
    <property type="evidence" value="ECO:0007669"/>
    <property type="project" value="UniProtKB-UniRule"/>
</dbReference>
<dbReference type="GO" id="GO:0039657">
    <property type="term" value="P:symbiont-mediated suppression of host gene expression"/>
    <property type="evidence" value="ECO:0007669"/>
    <property type="project" value="UniProtKB-KW"/>
</dbReference>
<dbReference type="GO" id="GO:0039523">
    <property type="term" value="P:symbiont-mediated suppression of host mRNA transcription via inhibition of RNA polymerase II activity"/>
    <property type="evidence" value="ECO:0007669"/>
    <property type="project" value="UniProtKB-UniRule"/>
</dbReference>
<dbReference type="GO" id="GO:0039694">
    <property type="term" value="P:viral RNA genome replication"/>
    <property type="evidence" value="ECO:0007669"/>
    <property type="project" value="InterPro"/>
</dbReference>
<dbReference type="GO" id="GO:0075523">
    <property type="term" value="P:viral translational frameshifting"/>
    <property type="evidence" value="ECO:0007669"/>
    <property type="project" value="UniProtKB-KW"/>
</dbReference>
<dbReference type="Gene3D" id="3.40.91.90">
    <property type="entry name" value="Influenza RNA-dependent RNA polymerase subunit PA, endonuclease domain"/>
    <property type="match status" value="1"/>
</dbReference>
<dbReference type="HAMAP" id="MF_04063">
    <property type="entry name" value="INFV_PA"/>
    <property type="match status" value="1"/>
</dbReference>
<dbReference type="InterPro" id="IPR037534">
    <property type="entry name" value="INFV_PA"/>
</dbReference>
<dbReference type="InterPro" id="IPR001009">
    <property type="entry name" value="PA/PA-X"/>
</dbReference>
<dbReference type="InterPro" id="IPR038372">
    <property type="entry name" value="PA/PA-X_sf"/>
</dbReference>
<dbReference type="Pfam" id="PF00603">
    <property type="entry name" value="Flu_PA"/>
    <property type="match status" value="1"/>
</dbReference>
<organismHost>
    <name type="scientific">Homo sapiens</name>
    <name type="common">Human</name>
    <dbReference type="NCBI Taxonomy" id="9606"/>
</organismHost>
<feature type="chain" id="PRO_0000078806" description="Polymerase acidic protein">
    <location>
        <begin position="1"/>
        <end position="726"/>
    </location>
</feature>
<feature type="short sequence motif" description="Nuclear localization signal 1 (NLS1)" evidence="1">
    <location>
        <begin position="125"/>
        <end position="140"/>
    </location>
</feature>
<feature type="short sequence motif" description="Nuclear localization signal 2 (NLS2)" evidence="1">
    <location>
        <begin position="183"/>
        <end position="244"/>
    </location>
</feature>
<feature type="binding site" evidence="1">
    <location>
        <position position="41"/>
    </location>
    <ligand>
        <name>Mn(2+)</name>
        <dbReference type="ChEBI" id="CHEBI:29035"/>
        <label>1</label>
    </ligand>
</feature>
<feature type="binding site" evidence="1">
    <location>
        <position position="81"/>
    </location>
    <ligand>
        <name>Mn(2+)</name>
        <dbReference type="ChEBI" id="CHEBI:29035"/>
        <label>2</label>
    </ligand>
</feature>
<feature type="binding site" evidence="1">
    <location>
        <position position="109"/>
    </location>
    <ligand>
        <name>Mn(2+)</name>
        <dbReference type="ChEBI" id="CHEBI:29035"/>
        <label>1</label>
    </ligand>
</feature>
<feature type="binding site" evidence="1">
    <location>
        <position position="109"/>
    </location>
    <ligand>
        <name>Mn(2+)</name>
        <dbReference type="ChEBI" id="CHEBI:29035"/>
        <label>2</label>
    </ligand>
</feature>
<feature type="binding site" evidence="1">
    <location>
        <position position="120"/>
    </location>
    <ligand>
        <name>Mn(2+)</name>
        <dbReference type="ChEBI" id="CHEBI:29035"/>
        <label>1</label>
    </ligand>
</feature>
<feature type="binding site" evidence="1">
    <location>
        <position position="121"/>
    </location>
    <ligand>
        <name>Mn(2+)</name>
        <dbReference type="ChEBI" id="CHEBI:29035"/>
        <label>1</label>
    </ligand>
</feature>
<protein>
    <recommendedName>
        <fullName evidence="1">Polymerase acidic protein</fullName>
        <ecNumber evidence="1">3.1.-.-</ecNumber>
    </recommendedName>
    <alternativeName>
        <fullName evidence="1">RNA-directed RNA polymerase subunit P2</fullName>
    </alternativeName>
</protein>
<keyword id="KW-1157">Cap snatching</keyword>
<keyword id="KW-0255">Endonuclease</keyword>
<keyword id="KW-1262">Eukaryotic host gene expression shutoff by virus</keyword>
<keyword id="KW-1191">Eukaryotic host transcription shutoff by virus</keyword>
<keyword id="KW-1035">Host cytoplasm</keyword>
<keyword id="KW-1190">Host gene expression shutoff by virus</keyword>
<keyword id="KW-1048">Host nucleus</keyword>
<keyword id="KW-0945">Host-virus interaction</keyword>
<keyword id="KW-0378">Hydrolase</keyword>
<keyword id="KW-1104">Inhibition of host RNA polymerase II by virus</keyword>
<keyword id="KW-0464">Manganese</keyword>
<keyword id="KW-0479">Metal-binding</keyword>
<keyword id="KW-0540">Nuclease</keyword>
<keyword id="KW-0597">Phosphoprotein</keyword>
<keyword id="KW-0688">Ribosomal frameshifting</keyword>
<name>PA_INBAC</name>
<organism>
    <name type="scientific">Influenza B virus (strain B/Ann Arbor/1/1966 [cold-adapted])</name>
    <dbReference type="NCBI Taxonomy" id="11522"/>
    <lineage>
        <taxon>Viruses</taxon>
        <taxon>Riboviria</taxon>
        <taxon>Orthornavirae</taxon>
        <taxon>Negarnaviricota</taxon>
        <taxon>Polyploviricotina</taxon>
        <taxon>Insthoviricetes</taxon>
        <taxon>Articulavirales</taxon>
        <taxon>Orthomyxoviridae</taxon>
        <taxon>Betainfluenzavirus</taxon>
        <taxon>Betainfluenzavirus influenzae</taxon>
        <taxon>Influenza B virus</taxon>
    </lineage>
</organism>
<evidence type="ECO:0000255" key="1">
    <source>
        <dbReference type="HAMAP-Rule" id="MF_04063"/>
    </source>
</evidence>